<proteinExistence type="inferred from homology"/>
<keyword id="KW-0129">CBS domain</keyword>
<keyword id="KW-0868">Chloride</keyword>
<keyword id="KW-0869">Chloride channel</keyword>
<keyword id="KW-0407">Ion channel</keyword>
<keyword id="KW-0406">Ion transport</keyword>
<keyword id="KW-0472">Membrane</keyword>
<keyword id="KW-1185">Reference proteome</keyword>
<keyword id="KW-0677">Repeat</keyword>
<keyword id="KW-0812">Transmembrane</keyword>
<keyword id="KW-1133">Transmembrane helix</keyword>
<keyword id="KW-0813">Transport</keyword>
<keyword id="KW-0851">Voltage-gated channel</keyword>
<evidence type="ECO:0000250" key="1"/>
<evidence type="ECO:0000255" key="2"/>
<evidence type="ECO:0000255" key="3">
    <source>
        <dbReference type="PROSITE-ProRule" id="PRU00703"/>
    </source>
</evidence>
<evidence type="ECO:0000256" key="4">
    <source>
        <dbReference type="SAM" id="MobiDB-lite"/>
    </source>
</evidence>
<evidence type="ECO:0000305" key="5"/>
<reference key="1">
    <citation type="journal article" date="2005" name="Nature">
        <title>The genome of the social amoeba Dictyostelium discoideum.</title>
        <authorList>
            <person name="Eichinger L."/>
            <person name="Pachebat J.A."/>
            <person name="Gloeckner G."/>
            <person name="Rajandream M.A."/>
            <person name="Sucgang R."/>
            <person name="Berriman M."/>
            <person name="Song J."/>
            <person name="Olsen R."/>
            <person name="Szafranski K."/>
            <person name="Xu Q."/>
            <person name="Tunggal B."/>
            <person name="Kummerfeld S."/>
            <person name="Madera M."/>
            <person name="Konfortov B.A."/>
            <person name="Rivero F."/>
            <person name="Bankier A.T."/>
            <person name="Lehmann R."/>
            <person name="Hamlin N."/>
            <person name="Davies R."/>
            <person name="Gaudet P."/>
            <person name="Fey P."/>
            <person name="Pilcher K."/>
            <person name="Chen G."/>
            <person name="Saunders D."/>
            <person name="Sodergren E.J."/>
            <person name="Davis P."/>
            <person name="Kerhornou A."/>
            <person name="Nie X."/>
            <person name="Hall N."/>
            <person name="Anjard C."/>
            <person name="Hemphill L."/>
            <person name="Bason N."/>
            <person name="Farbrother P."/>
            <person name="Desany B."/>
            <person name="Just E."/>
            <person name="Morio T."/>
            <person name="Rost R."/>
            <person name="Churcher C.M."/>
            <person name="Cooper J."/>
            <person name="Haydock S."/>
            <person name="van Driessche N."/>
            <person name="Cronin A."/>
            <person name="Goodhead I."/>
            <person name="Muzny D.M."/>
            <person name="Mourier T."/>
            <person name="Pain A."/>
            <person name="Lu M."/>
            <person name="Harper D."/>
            <person name="Lindsay R."/>
            <person name="Hauser H."/>
            <person name="James K.D."/>
            <person name="Quiles M."/>
            <person name="Madan Babu M."/>
            <person name="Saito T."/>
            <person name="Buchrieser C."/>
            <person name="Wardroper A."/>
            <person name="Felder M."/>
            <person name="Thangavelu M."/>
            <person name="Johnson D."/>
            <person name="Knights A."/>
            <person name="Loulseged H."/>
            <person name="Mungall K.L."/>
            <person name="Oliver K."/>
            <person name="Price C."/>
            <person name="Quail M.A."/>
            <person name="Urushihara H."/>
            <person name="Hernandez J."/>
            <person name="Rabbinowitsch E."/>
            <person name="Steffen D."/>
            <person name="Sanders M."/>
            <person name="Ma J."/>
            <person name="Kohara Y."/>
            <person name="Sharp S."/>
            <person name="Simmonds M.N."/>
            <person name="Spiegler S."/>
            <person name="Tivey A."/>
            <person name="Sugano S."/>
            <person name="White B."/>
            <person name="Walker D."/>
            <person name="Woodward J.R."/>
            <person name="Winckler T."/>
            <person name="Tanaka Y."/>
            <person name="Shaulsky G."/>
            <person name="Schleicher M."/>
            <person name="Weinstock G.M."/>
            <person name="Rosenthal A."/>
            <person name="Cox E.C."/>
            <person name="Chisholm R.L."/>
            <person name="Gibbs R.A."/>
            <person name="Loomis W.F."/>
            <person name="Platzer M."/>
            <person name="Kay R.R."/>
            <person name="Williams J.G."/>
            <person name="Dear P.H."/>
            <person name="Noegel A.A."/>
            <person name="Barrell B.G."/>
            <person name="Kuspa A."/>
        </authorList>
    </citation>
    <scope>NUCLEOTIDE SEQUENCE [LARGE SCALE GENOMIC DNA]</scope>
    <source>
        <strain>AX4</strain>
    </source>
</reference>
<name>CLCE_DICDI</name>
<protein>
    <recommendedName>
        <fullName>Chloride channel protein E</fullName>
    </recommendedName>
</protein>
<accession>Q54LQ4</accession>
<feature type="chain" id="PRO_0000328047" description="Chloride channel protein E">
    <location>
        <begin position="1"/>
        <end position="994"/>
    </location>
</feature>
<feature type="topological domain" description="Cytoplasmic" evidence="2">
    <location>
        <begin position="1"/>
        <end position="163"/>
    </location>
</feature>
<feature type="transmembrane region" description="Helical" evidence="2">
    <location>
        <begin position="164"/>
        <end position="184"/>
    </location>
</feature>
<feature type="transmembrane region" description="Helical" evidence="2">
    <location>
        <begin position="227"/>
        <end position="247"/>
    </location>
</feature>
<feature type="transmembrane region" description="Helical" evidence="2">
    <location>
        <begin position="271"/>
        <end position="291"/>
    </location>
</feature>
<feature type="transmembrane region" description="Helical" evidence="2">
    <location>
        <begin position="300"/>
        <end position="320"/>
    </location>
</feature>
<feature type="transmembrane region" description="Helical" evidence="2">
    <location>
        <begin position="334"/>
        <end position="354"/>
    </location>
</feature>
<feature type="transmembrane region" description="Helical" evidence="2">
    <location>
        <begin position="362"/>
        <end position="382"/>
    </location>
</feature>
<feature type="transmembrane region" description="Helical" evidence="2">
    <location>
        <begin position="410"/>
        <end position="430"/>
    </location>
</feature>
<feature type="transmembrane region" description="Helical" evidence="2">
    <location>
        <begin position="449"/>
        <end position="469"/>
    </location>
</feature>
<feature type="transmembrane region" description="Helical" evidence="2">
    <location>
        <begin position="505"/>
        <end position="525"/>
    </location>
</feature>
<feature type="transmembrane region" description="Helical" evidence="2">
    <location>
        <begin position="527"/>
        <end position="547"/>
    </location>
</feature>
<feature type="transmembrane region" description="Helical" evidence="2">
    <location>
        <begin position="554"/>
        <end position="574"/>
    </location>
</feature>
<feature type="domain" description="CBS 1" evidence="3">
    <location>
        <begin position="644"/>
        <end position="705"/>
    </location>
</feature>
<feature type="domain" description="CBS 2" evidence="3">
    <location>
        <begin position="944"/>
        <end position="994"/>
    </location>
</feature>
<feature type="region of interest" description="Disordered" evidence="4">
    <location>
        <begin position="1"/>
        <end position="33"/>
    </location>
</feature>
<feature type="region of interest" description="Disordered" evidence="4">
    <location>
        <begin position="715"/>
        <end position="767"/>
    </location>
</feature>
<feature type="region of interest" description="Disordered" evidence="4">
    <location>
        <begin position="802"/>
        <end position="822"/>
    </location>
</feature>
<feature type="region of interest" description="Disordered" evidence="4">
    <location>
        <begin position="846"/>
        <end position="872"/>
    </location>
</feature>
<feature type="compositionally biased region" description="Low complexity" evidence="4">
    <location>
        <begin position="11"/>
        <end position="32"/>
    </location>
</feature>
<feature type="compositionally biased region" description="Low complexity" evidence="4">
    <location>
        <begin position="717"/>
        <end position="764"/>
    </location>
</feature>
<feature type="compositionally biased region" description="Low complexity" evidence="4">
    <location>
        <begin position="809"/>
        <end position="822"/>
    </location>
</feature>
<feature type="compositionally biased region" description="Acidic residues" evidence="4">
    <location>
        <begin position="859"/>
        <end position="870"/>
    </location>
</feature>
<gene>
    <name type="primary">clcE</name>
    <name type="ORF">DDB_G0286491</name>
</gene>
<comment type="function">
    <text evidence="1">Voltage-gated chloride channel. Chloride channels may have several functions including the regulation of cell volume, membrane potential stabilization and signal transduction (By similarity).</text>
</comment>
<comment type="subcellular location">
    <subcellularLocation>
        <location evidence="1">Membrane</location>
        <topology evidence="1">Multi-pass membrane protein</topology>
    </subcellularLocation>
</comment>
<comment type="similarity">
    <text evidence="5">Belongs to the chloride channel (TC 2.A.49) family.</text>
</comment>
<sequence>MTRKENEESESLSSSSSPIDNSNNNNNNNNHSIFNPIGHIQNAFNNIDLNPLNVDFKGHTDKVVNFFQHGTGDLNDRMQGVVSKLRSNEYRKKMHSVLTKIKDTKEYKSTSNTDYDVIFESVDMYSNLQQDPTMDKDEIDVVTDLSSYKKKFTHWLGKERISTLLFIPTLGILIALMGILCDFLLMELGTLRDFVTSRHNSHVIPTDGTTPTPNSSIADKYDLVEGIVFVGYSVFFALISVCCISFISPYAVGSGIPEMKSIMSGINLSRVLGFKTLVSKIVGMVCASAAGLTIGRTGPFMHASAIISQMLMNLKVFGAIKKNQIVRYQMLICALTSGVVANFGAPIGGLLFAIEVTATTAVMGNLWKGFLCATTTAIIFFLSRSTFSKGNFHSVYEFEFVPKEYGVADLITFVGIGIITGLIGAFFVFIYEKLVRFRLRYPILKQSRIILVLVVSLFSAIITYSAGPLCRVSLPTAMKQFLGQNEPKPFLFEQDQTPYYKYLNLLVFIVVKLILTAFNIVLPIPGGAITPFIVTGAALGRLFGEILKDHFDSQAIEPAGFAAIASAGLVSGTIRNISPSIFVLELTGQLSLLVPILICSITSTAVGNFFNRPLFDTALKIQGLPFLSNYRSSKVYTMTAKQVMKKNINYLSMTSTVIEMKNFLDTFKYTFIPIVDSKENMLLVGIVERSSMIYMLDIHIENIEQKIDEFKSKYFVNNNNNNNNNNNNNNNNNNNNNNNNNNNNNNNNNNNNNNNNNNNNNSNNSENLEIENTGAILNTNSNNNNSDEEDYDRKDNDKISLIKPNQDESSSNSNGGSSSDFEEILNTQNTNINKNDNEDLIKEIEDENSSLGEKPIIEHDDEDDDEEEGDGIPLVSMKDQQPVLRNRHTTTTTTTTTTTPITENIYVNDAFEISINDLKNGGQSVWGKHILGDIIHSGETALLMDLAPSQVPDLTPLNKVFHLFTMLGLGFTYVTSLGKLVGVITKNSLMEQDL</sequence>
<organism>
    <name type="scientific">Dictyostelium discoideum</name>
    <name type="common">Social amoeba</name>
    <dbReference type="NCBI Taxonomy" id="44689"/>
    <lineage>
        <taxon>Eukaryota</taxon>
        <taxon>Amoebozoa</taxon>
        <taxon>Evosea</taxon>
        <taxon>Eumycetozoa</taxon>
        <taxon>Dictyostelia</taxon>
        <taxon>Dictyosteliales</taxon>
        <taxon>Dictyosteliaceae</taxon>
        <taxon>Dictyostelium</taxon>
    </lineage>
</organism>
<dbReference type="EMBL" id="AAFI02000086">
    <property type="protein sequence ID" value="EAL64196.1"/>
    <property type="molecule type" value="Genomic_DNA"/>
</dbReference>
<dbReference type="RefSeq" id="XP_637702.1">
    <property type="nucleotide sequence ID" value="XM_632610.1"/>
</dbReference>
<dbReference type="SMR" id="Q54LQ4"/>
<dbReference type="PaxDb" id="44689-DDB0233306"/>
<dbReference type="EnsemblProtists" id="EAL64196">
    <property type="protein sequence ID" value="EAL64196"/>
    <property type="gene ID" value="DDB_G0286491"/>
</dbReference>
<dbReference type="GeneID" id="8625644"/>
<dbReference type="KEGG" id="ddi:DDB_G0286491"/>
<dbReference type="dictyBase" id="DDB_G0286491">
    <property type="gene designation" value="clcE"/>
</dbReference>
<dbReference type="VEuPathDB" id="AmoebaDB:DDB_G0286491"/>
<dbReference type="eggNOG" id="KOG0476">
    <property type="taxonomic scope" value="Eukaryota"/>
</dbReference>
<dbReference type="HOGENOM" id="CLU_300996_0_0_1"/>
<dbReference type="InParanoid" id="Q54LQ4"/>
<dbReference type="OMA" id="FMHASAI"/>
<dbReference type="PhylomeDB" id="Q54LQ4"/>
<dbReference type="Reactome" id="R-DDI-2672351">
    <property type="pathway name" value="Stimuli-sensing channels"/>
</dbReference>
<dbReference type="PRO" id="PR:Q54LQ4"/>
<dbReference type="Proteomes" id="UP000002195">
    <property type="component" value="Chromosome 4"/>
</dbReference>
<dbReference type="GO" id="GO:0034707">
    <property type="term" value="C:chloride channel complex"/>
    <property type="evidence" value="ECO:0007669"/>
    <property type="project" value="UniProtKB-KW"/>
</dbReference>
<dbReference type="GO" id="GO:0005247">
    <property type="term" value="F:voltage-gated chloride channel activity"/>
    <property type="evidence" value="ECO:0000318"/>
    <property type="project" value="GO_Central"/>
</dbReference>
<dbReference type="GO" id="GO:0006821">
    <property type="term" value="P:chloride transport"/>
    <property type="evidence" value="ECO:0000318"/>
    <property type="project" value="GO_Central"/>
</dbReference>
<dbReference type="CDD" id="cd03683">
    <property type="entry name" value="ClC_1_like"/>
    <property type="match status" value="1"/>
</dbReference>
<dbReference type="Gene3D" id="3.10.580.10">
    <property type="entry name" value="CBS-domain"/>
    <property type="match status" value="2"/>
</dbReference>
<dbReference type="Gene3D" id="1.10.3080.10">
    <property type="entry name" value="Clc chloride channel"/>
    <property type="match status" value="1"/>
</dbReference>
<dbReference type="InterPro" id="IPR000644">
    <property type="entry name" value="CBS_dom"/>
</dbReference>
<dbReference type="InterPro" id="IPR046342">
    <property type="entry name" value="CBS_dom_sf"/>
</dbReference>
<dbReference type="InterPro" id="IPR014743">
    <property type="entry name" value="Cl-channel_core"/>
</dbReference>
<dbReference type="InterPro" id="IPR050970">
    <property type="entry name" value="Cl_channel_volt-gated"/>
</dbReference>
<dbReference type="InterPro" id="IPR001807">
    <property type="entry name" value="ClC"/>
</dbReference>
<dbReference type="PANTHER" id="PTHR45720">
    <property type="entry name" value="CHLORIDE CHANNEL PROTEIN 2"/>
    <property type="match status" value="1"/>
</dbReference>
<dbReference type="PANTHER" id="PTHR45720:SF10">
    <property type="entry name" value="CHLORIDE CHANNEL PROTEIN 2"/>
    <property type="match status" value="1"/>
</dbReference>
<dbReference type="Pfam" id="PF00654">
    <property type="entry name" value="Voltage_CLC"/>
    <property type="match status" value="1"/>
</dbReference>
<dbReference type="PRINTS" id="PR00762">
    <property type="entry name" value="CLCHANNEL"/>
</dbReference>
<dbReference type="SUPFAM" id="SSF54631">
    <property type="entry name" value="CBS-domain pair"/>
    <property type="match status" value="1"/>
</dbReference>
<dbReference type="SUPFAM" id="SSF81340">
    <property type="entry name" value="Clc chloride channel"/>
    <property type="match status" value="1"/>
</dbReference>
<dbReference type="PROSITE" id="PS51371">
    <property type="entry name" value="CBS"/>
    <property type="match status" value="2"/>
</dbReference>